<protein>
    <recommendedName>
        <fullName evidence="1">Outer-membrane lipoprotein carrier protein</fullName>
    </recommendedName>
</protein>
<accession>A3D4J1</accession>
<organism>
    <name type="scientific">Shewanella baltica (strain OS155 / ATCC BAA-1091)</name>
    <dbReference type="NCBI Taxonomy" id="325240"/>
    <lineage>
        <taxon>Bacteria</taxon>
        <taxon>Pseudomonadati</taxon>
        <taxon>Pseudomonadota</taxon>
        <taxon>Gammaproteobacteria</taxon>
        <taxon>Alteromonadales</taxon>
        <taxon>Shewanellaceae</taxon>
        <taxon>Shewanella</taxon>
    </lineage>
</organism>
<sequence>MKKRLCAVLLASPLLFSAAVFADDAQQLRDKLIGTASLKADFKQTVTDVNKKVIQTGSGIFALAYPNQFYWHLTQPDESQIVADGKDLWIYNPFAEEVVIMDFAEAINASPIALLVHRDDATWSQYSVTKQQDCYEIKPKAIDSGILSVKVCFKNAQLANFNVADDKGNLSQFDLSNQQAITDKDKALFSFVLPDNVDVDDQRRKTAH</sequence>
<proteinExistence type="inferred from homology"/>
<reference key="1">
    <citation type="submission" date="2007-02" db="EMBL/GenBank/DDBJ databases">
        <title>Complete sequence of chromosome of Shewanella baltica OS155.</title>
        <authorList>
            <consortium name="US DOE Joint Genome Institute"/>
            <person name="Copeland A."/>
            <person name="Lucas S."/>
            <person name="Lapidus A."/>
            <person name="Barry K."/>
            <person name="Detter J.C."/>
            <person name="Glavina del Rio T."/>
            <person name="Hammon N."/>
            <person name="Israni S."/>
            <person name="Dalin E."/>
            <person name="Tice H."/>
            <person name="Pitluck S."/>
            <person name="Sims D.R."/>
            <person name="Brettin T."/>
            <person name="Bruce D."/>
            <person name="Han C."/>
            <person name="Tapia R."/>
            <person name="Brainard J."/>
            <person name="Schmutz J."/>
            <person name="Larimer F."/>
            <person name="Land M."/>
            <person name="Hauser L."/>
            <person name="Kyrpides N."/>
            <person name="Mikhailova N."/>
            <person name="Brettar I."/>
            <person name="Klappenbach J."/>
            <person name="Konstantinidis K."/>
            <person name="Rodrigues J."/>
            <person name="Tiedje J."/>
            <person name="Richardson P."/>
        </authorList>
    </citation>
    <scope>NUCLEOTIDE SEQUENCE [LARGE SCALE GENOMIC DNA]</scope>
    <source>
        <strain>OS155 / ATCC BAA-1091</strain>
    </source>
</reference>
<feature type="signal peptide" evidence="1">
    <location>
        <begin position="1"/>
        <end position="22"/>
    </location>
</feature>
<feature type="chain" id="PRO_5000224552" description="Outer-membrane lipoprotein carrier protein">
    <location>
        <begin position="23"/>
        <end position="208"/>
    </location>
</feature>
<comment type="function">
    <text evidence="1">Participates in the translocation of lipoproteins from the inner membrane to the outer membrane. Only forms a complex with a lipoprotein if the residue after the N-terminal Cys is not an aspartate (The Asp acts as a targeting signal to indicate that the lipoprotein should stay in the inner membrane).</text>
</comment>
<comment type="subunit">
    <text evidence="1">Monomer.</text>
</comment>
<comment type="subcellular location">
    <subcellularLocation>
        <location evidence="1">Periplasm</location>
    </subcellularLocation>
</comment>
<comment type="similarity">
    <text evidence="1">Belongs to the LolA family.</text>
</comment>
<name>LOLA_SHEB5</name>
<keyword id="KW-0143">Chaperone</keyword>
<keyword id="KW-0574">Periplasm</keyword>
<keyword id="KW-0653">Protein transport</keyword>
<keyword id="KW-1185">Reference proteome</keyword>
<keyword id="KW-0732">Signal</keyword>
<keyword id="KW-0813">Transport</keyword>
<dbReference type="EMBL" id="CP000563">
    <property type="protein sequence ID" value="ABN61654.1"/>
    <property type="molecule type" value="Genomic_DNA"/>
</dbReference>
<dbReference type="RefSeq" id="WP_011846837.1">
    <property type="nucleotide sequence ID" value="NC_009052.1"/>
</dbReference>
<dbReference type="SMR" id="A3D4J1"/>
<dbReference type="STRING" id="325240.Sbal_2157"/>
<dbReference type="KEGG" id="sbl:Sbal_2157"/>
<dbReference type="HOGENOM" id="CLU_087560_1_1_6"/>
<dbReference type="OrthoDB" id="9787361at2"/>
<dbReference type="Proteomes" id="UP000001557">
    <property type="component" value="Chromosome"/>
</dbReference>
<dbReference type="GO" id="GO:0030288">
    <property type="term" value="C:outer membrane-bounded periplasmic space"/>
    <property type="evidence" value="ECO:0007669"/>
    <property type="project" value="TreeGrafter"/>
</dbReference>
<dbReference type="GO" id="GO:0044874">
    <property type="term" value="P:lipoprotein localization to outer membrane"/>
    <property type="evidence" value="ECO:0007669"/>
    <property type="project" value="UniProtKB-UniRule"/>
</dbReference>
<dbReference type="GO" id="GO:0042953">
    <property type="term" value="P:lipoprotein transport"/>
    <property type="evidence" value="ECO:0007669"/>
    <property type="project" value="InterPro"/>
</dbReference>
<dbReference type="CDD" id="cd16325">
    <property type="entry name" value="LolA"/>
    <property type="match status" value="1"/>
</dbReference>
<dbReference type="Gene3D" id="2.50.20.10">
    <property type="entry name" value="Lipoprotein localisation LolA/LolB/LppX"/>
    <property type="match status" value="1"/>
</dbReference>
<dbReference type="HAMAP" id="MF_00240">
    <property type="entry name" value="LolA"/>
    <property type="match status" value="1"/>
</dbReference>
<dbReference type="InterPro" id="IPR029046">
    <property type="entry name" value="LolA/LolB/LppX"/>
</dbReference>
<dbReference type="InterPro" id="IPR004564">
    <property type="entry name" value="OM_lipoprot_carrier_LolA-like"/>
</dbReference>
<dbReference type="InterPro" id="IPR018323">
    <property type="entry name" value="OM_lipoprot_carrier_LolA_Pbac"/>
</dbReference>
<dbReference type="NCBIfam" id="TIGR00547">
    <property type="entry name" value="lolA"/>
    <property type="match status" value="1"/>
</dbReference>
<dbReference type="PANTHER" id="PTHR35869">
    <property type="entry name" value="OUTER-MEMBRANE LIPOPROTEIN CARRIER PROTEIN"/>
    <property type="match status" value="1"/>
</dbReference>
<dbReference type="PANTHER" id="PTHR35869:SF1">
    <property type="entry name" value="OUTER-MEMBRANE LIPOPROTEIN CARRIER PROTEIN"/>
    <property type="match status" value="1"/>
</dbReference>
<dbReference type="Pfam" id="PF03548">
    <property type="entry name" value="LolA"/>
    <property type="match status" value="1"/>
</dbReference>
<dbReference type="SUPFAM" id="SSF89392">
    <property type="entry name" value="Prokaryotic lipoproteins and lipoprotein localization factors"/>
    <property type="match status" value="1"/>
</dbReference>
<gene>
    <name evidence="1" type="primary">lolA</name>
    <name type="ordered locus">Sbal_2157</name>
</gene>
<evidence type="ECO:0000255" key="1">
    <source>
        <dbReference type="HAMAP-Rule" id="MF_00240"/>
    </source>
</evidence>